<sequence length="11" mass="1278">EDDLSDFNPKV</sequence>
<evidence type="ECO:0000269" key="1">
    <source>
    </source>
</evidence>
<evidence type="ECO:0000303" key="2">
    <source>
    </source>
</evidence>
<evidence type="ECO:0000305" key="3"/>
<evidence type="ECO:0000305" key="4">
    <source>
    </source>
</evidence>
<feature type="peptide" id="PRO_0000453648" description="Venom peptide Sh42" evidence="1">
    <location>
        <begin position="1"/>
        <end position="11"/>
    </location>
</feature>
<keyword id="KW-0903">Direct protein sequencing</keyword>
<keyword id="KW-0964">Secreted</keyword>
<proteinExistence type="evidence at protein level"/>
<comment type="subcellular location">
    <subcellularLocation>
        <location evidence="1">Secreted</location>
    </subcellularLocation>
</comment>
<comment type="tissue specificity">
    <text evidence="4">Expressed by the venom gland.</text>
</comment>
<comment type="mass spectrometry" mass="1277.6" method="MALDI" evidence="1">
    <text>Monoisotopic mass.</text>
</comment>
<comment type="miscellaneous">
    <text evidence="1">Negative results: does not show activity on voltage-gated sodium channels, potassium channels, and calcium channels. All the following channels have been tested at 10 uM: Kv1.1/KCNA1, Kv1.2/KCNA2, Kv1.3/KCNA3, Kv1.4/KCNA4, Kv1.5/KCNA5, Kv1.6/KCNA6, Kv2.1/KCNB1, Kv3.1/KCNC1, Kv4.2/KCND2, Kv4.3/KCND3, Shaker IR, and Kv11.1/KCNH2/ERG1, as well as Nav1.2/SCN2A, Nav1.4/SCN4A, Nav1.5/SCN5A, Nav1.6/SCN8A, Nav1.8/SCN10A, and DmNav1, and the nicotinic acetylcholine receptor alpha-7 (CHRNA7).</text>
</comment>
<comment type="similarity">
    <text evidence="3">Belongs to the SA81-like family.</text>
</comment>
<name>VP42_ISOHA</name>
<dbReference type="GO" id="GO:0005576">
    <property type="term" value="C:extracellular region"/>
    <property type="evidence" value="ECO:0007669"/>
    <property type="project" value="UniProtKB-SubCell"/>
</dbReference>
<organism>
    <name type="scientific">Isodontia harmandi</name>
    <name type="common">Grass-carrying wasp</name>
    <dbReference type="NCBI Taxonomy" id="2838365"/>
    <lineage>
        <taxon>Eukaryota</taxon>
        <taxon>Metazoa</taxon>
        <taxon>Ecdysozoa</taxon>
        <taxon>Arthropoda</taxon>
        <taxon>Hexapoda</taxon>
        <taxon>Insecta</taxon>
        <taxon>Pterygota</taxon>
        <taxon>Neoptera</taxon>
        <taxon>Endopterygota</taxon>
        <taxon>Hymenoptera</taxon>
        <taxon>Apocrita</taxon>
        <taxon>Aculeata</taxon>
        <taxon>Apoidea</taxon>
        <taxon>Sphecidae</taxon>
        <taxon>Sphecinae</taxon>
        <taxon>Sphecina</taxon>
        <taxon>Isodontia</taxon>
    </lineage>
</organism>
<reference key="1">
    <citation type="journal article" date="2021" name="Peptides">
        <title>Isolation and characterization of FMRFamide-like peptides in the venoms of solitary sphecid wasps.</title>
        <authorList>
            <person name="Nihei K.I."/>
            <person name="Peigneur S."/>
            <person name="Tytgat J."/>
            <person name="Lange A.B."/>
            <person name="Konno K."/>
        </authorList>
    </citation>
    <scope>PROTEIN SEQUENCE</scope>
    <scope>SUBCELLULAR LOCATION</scope>
    <scope>MASS SPECTROMETRY</scope>
    <source>
        <tissue>Venom</tissue>
    </source>
</reference>
<protein>
    <recommendedName>
        <fullName evidence="2">Venom peptide Sh42</fullName>
    </recommendedName>
</protein>
<accession>P0DUU9</accession>